<feature type="propeptide" id="PRO_0000029404" evidence="2 3">
    <location>
        <begin position="1"/>
        <end position="4"/>
    </location>
</feature>
<feature type="chain" id="PRO_0000029405" description="Photosystem I reaction center subunit PsaK">
    <location>
        <begin position="5"/>
        <end position="83"/>
    </location>
</feature>
<feature type="transmembrane region" description="Helical" evidence="1">
    <location>
        <begin position="12"/>
        <end position="30"/>
    </location>
</feature>
<feature type="transmembrane region" description="Helical" evidence="1">
    <location>
        <begin position="68"/>
        <end position="83"/>
    </location>
</feature>
<feature type="sequence conflict" description="In Ref. 2; AA sequence and 3; AA sequence." evidence="4" ref="2 3">
    <original>W</original>
    <variation>V</variation>
    <location>
        <position position="11"/>
    </location>
</feature>
<feature type="sequence conflict" description="In Ref. 3; AA sequence." evidence="4" ref="3">
    <original>C</original>
    <variation>S</variation>
    <location>
        <position position="22"/>
    </location>
</feature>
<feature type="sequence conflict" description="In Ref. 2; AA sequence." evidence="4" ref="2">
    <location>
        <position position="22"/>
    </location>
</feature>
<evidence type="ECO:0000255" key="1"/>
<evidence type="ECO:0000269" key="2">
    <source>
    </source>
</evidence>
<evidence type="ECO:0000269" key="3">
    <source>
    </source>
</evidence>
<evidence type="ECO:0000305" key="4"/>
<keyword id="KW-0903">Direct protein sequencing</keyword>
<keyword id="KW-0472">Membrane</keyword>
<keyword id="KW-0602">Photosynthesis</keyword>
<keyword id="KW-0603">Photosystem I</keyword>
<keyword id="KW-0793">Thylakoid</keyword>
<keyword id="KW-0812">Transmembrane</keyword>
<keyword id="KW-1133">Transmembrane helix</keyword>
<gene>
    <name type="primary">psaK</name>
</gene>
<sequence>MVLATLPDTTWTPSVGLVVILCNLFAIALGRYAIQSRGKGPGLPIALPALFEGFGLPELLATTSFGHLLAAGVVSGLQYAGAL</sequence>
<comment type="subcellular location">
    <subcellularLocation>
        <location evidence="4">Cellular thylakoid membrane</location>
        <topology evidence="4">Multi-pass membrane protein</topology>
    </subcellularLocation>
</comment>
<comment type="similarity">
    <text evidence="4">Belongs to the PsaG/PsaK family.</text>
</comment>
<proteinExistence type="evidence at protein level"/>
<dbReference type="EMBL" id="X63764">
    <property type="protein sequence ID" value="CAA45298.1"/>
    <property type="molecule type" value="Genomic_DNA"/>
</dbReference>
<dbReference type="PIR" id="C35567">
    <property type="entry name" value="C35567"/>
</dbReference>
<dbReference type="SMR" id="P0A426"/>
<dbReference type="GO" id="GO:0009522">
    <property type="term" value="C:photosystem I"/>
    <property type="evidence" value="ECO:0007669"/>
    <property type="project" value="UniProtKB-KW"/>
</dbReference>
<dbReference type="GO" id="GO:0031676">
    <property type="term" value="C:plasma membrane-derived thylakoid membrane"/>
    <property type="evidence" value="ECO:0007669"/>
    <property type="project" value="UniProtKB-SubCell"/>
</dbReference>
<dbReference type="GO" id="GO:0015979">
    <property type="term" value="P:photosynthesis"/>
    <property type="evidence" value="ECO:0007669"/>
    <property type="project" value="UniProtKB-UniRule"/>
</dbReference>
<dbReference type="Gene3D" id="1.20.860.20">
    <property type="entry name" value="Photosystem I PsaK, reaction centre"/>
    <property type="match status" value="1"/>
</dbReference>
<dbReference type="HAMAP" id="MF_00474">
    <property type="entry name" value="PSI_PsaK"/>
    <property type="match status" value="1"/>
</dbReference>
<dbReference type="InterPro" id="IPR035982">
    <property type="entry name" value="PSI_centre_PsaK_sf"/>
</dbReference>
<dbReference type="InterPro" id="IPR000549">
    <property type="entry name" value="PSI_PsaG/PsaK"/>
</dbReference>
<dbReference type="InterPro" id="IPR017492">
    <property type="entry name" value="PSI_PsaK"/>
</dbReference>
<dbReference type="InterPro" id="IPR037101">
    <property type="entry name" value="PSI_PsaK_bact"/>
</dbReference>
<dbReference type="NCBIfam" id="TIGR03049">
    <property type="entry name" value="PS_I_psaK"/>
    <property type="match status" value="1"/>
</dbReference>
<dbReference type="Pfam" id="PF01241">
    <property type="entry name" value="PSI_PSAK"/>
    <property type="match status" value="1"/>
</dbReference>
<dbReference type="SUPFAM" id="SSF81563">
    <property type="entry name" value="Photosystem I reaction center subunit X, PsaK"/>
    <property type="match status" value="1"/>
</dbReference>
<dbReference type="PROSITE" id="PS01026">
    <property type="entry name" value="PHOTOSYSTEM_I_PSAGK"/>
    <property type="match status" value="1"/>
</dbReference>
<name>PSAK_SYNEL</name>
<protein>
    <recommendedName>
        <fullName>Photosystem I reaction center subunit PsaK</fullName>
    </recommendedName>
    <alternativeName>
        <fullName>Light-harvesting 8.0 kDa polypeptide</fullName>
    </alternativeName>
    <alternativeName>
        <fullName>Photosystem I subunit X</fullName>
    </alternativeName>
</protein>
<accession>P0A426</accession>
<accession>P20453</accession>
<reference key="1">
    <citation type="journal article" date="1993" name="Gene">
        <title>Genes encoding eleven subunits of photosystem I from the thermophilic cyanobacterium Synechococcus sp.</title>
        <authorList>
            <person name="Muehlenhoff U."/>
            <person name="Haehnel W."/>
            <person name="Witt H.T."/>
            <person name="Herrmann R.G."/>
        </authorList>
    </citation>
    <scope>NUCLEOTIDE SEQUENCE [GENOMIC DNA]</scope>
</reference>
<reference key="2">
    <citation type="journal article" date="1991" name="Protein Seq. Data Anal.">
        <title>Amino acid sequence of the 8-kDa protein in photosystem I reaction center complex from a thermophilic cyanobacterium, Synechococcus elongatus.</title>
        <authorList>
            <person name="Jone C.S."/>
            <person name="Kotani N."/>
            <person name="Aso K."/>
            <person name="Yang L."/>
            <person name="Enami I."/>
            <person name="Kondo K."/>
            <person name="Tsugita A."/>
        </authorList>
    </citation>
    <scope>PROTEIN SEQUENCE OF 5-77</scope>
</reference>
<reference key="3">
    <citation type="journal article" date="1990" name="Protein Seq. Data Anal.">
        <title>N-terminal amino acid sequence analysis of small subunits of photosystem I reaction center complex from a thermophilic cyanobacterium, Synechococcus elongatus nageli.</title>
        <authorList>
            <person name="Enami I."/>
            <person name="Kaiho H."/>
            <person name="Izumi H."/>
            <person name="Katoh S."/>
            <person name="Kotani N."/>
            <person name="Jone C.S."/>
            <person name="Kamo M."/>
            <person name="Tsugita A."/>
        </authorList>
    </citation>
    <scope>PROTEIN SEQUENCE OF 5-35</scope>
</reference>
<organism>
    <name type="scientific">Synechococcus elongatus</name>
    <dbReference type="NCBI Taxonomy" id="32046"/>
    <lineage>
        <taxon>Bacteria</taxon>
        <taxon>Bacillati</taxon>
        <taxon>Cyanobacteriota</taxon>
        <taxon>Cyanophyceae</taxon>
        <taxon>Synechococcales</taxon>
        <taxon>Synechococcaceae</taxon>
        <taxon>Synechococcus</taxon>
    </lineage>
</organism>